<name>CRMPB_TOXGO</name>
<sequence>MTYCRKDKSTIELTAATAAPVSCEGAVTENFRTSRRSKEDPLVHLHSTLHGRSPLRQTCVNMDRVSPFCGTEGCVGSCAGSYCMGYGQCQCDINPHRARGERRTDRHGCTTGVHAHWTGAARRHASSLHPRGHRCQGKRRPCPLSLFPGSCRPCDSFGYPRSSMSSLASDANNSSSAADIVHDFCTKICDPVSVSSFAEVGGSPRSSDASSRPLGKALRKSRLVGFFLVPVFVVFFVLSSDATSSTRGVGVLSARADREEKSSVSSSSRASSSPGASALLVQTTYAENPYRDTKAAGYTGRSSRRSARARRRRAADGGEGKGFLGDMLNKSMLETRSRSTAADPYQQFTSCGSGMFVSTEVGEDGGVEKTAKVDESMNCWNVCAFVEDLVYDQCSSTPSPTECITRALKSHSLVPDGYKGNCRYSSPQDVSPTFWDAEPDSEFCLDKGMNAWLKSDSWDDFVSKKPPGCIYPKQDPSIPASTPTAYVNDATSGLGEALASLVPVEYYVVVRDAEEAMNNPIEYGAYVASSIVPREYWDKVSSDAKDGWHVARAFSVPDKPAEFAALTTAADGSSTSANICLYAAVETANHSDGTSKTFVNYGMIAQTETCEGKIGVLPVADIRGSGILDSSAQEISRKTGFNLCVARRWVTRHLSENGIKSTAQVPMFQVALDAPCASFVSAYAYTDEVPSHWGQWEQYFVAKTYPLTRGIYGIPDAARCPWSYAVQYGLKCYTSIEYDFYMYLGSFAEGQIACRRLVSNIQVPSDFSRLAVMQTDDDEKIMTFLSEPGTFTWVGLFQGSQALVPVKTGFMDSGRVSEQTCPAEVLATGQFSHRNSEIEEKCLQAGANISTPGWKTTWGGLDGNSEIAPWDIKWCSGHPQTERNNRYVDCAGLRVNDNMESCIESAPCDEANPVFCTYPVDYGPYLETTTPQGQSSTGPRLPPYIGCLLRKTCVIQFTLTRPDTSSDTTLPGAHGTIWGVPSEGGFLAVKANCMAVNGPMIGPYRVTSTVNLASLAAFRSARPGLYELCYCNTNSPAVSVVTTGATPDTQCMHQSSFNQLIASLGLTKYNENVGFSQAVQLPTASATVSTKSVLALVGRDSWGGVPTVYCGWQSTGRSCPFDVRVTSNGSWKLRPFTTKLTFYPVDSSVLVTDLCTSEESPAIVVSVTIQSGDTGSAILDAENATSLFYSVCEGKKFLGYVVLKEIGNAVEAKISLENVVLSDQTNVNADDVTLILRGEFTDALLLRSKVVAVSVESATDSDCSTLTLASLPESSVTIVPFPTLSSGTGDLVELHFKAGPSAKKLCWMETIAMGADRDSRTFSTYLVTFPRASTVRELSVEDSRCFGPSDHPCRFRVTPEPVPSEENPINASPYLPSTFRVYVMKDGCPSSAEDSVLDEIDNSSGADPVAANAKGILLELEWESESAMQAVLQPQYFPWLQAIGSANLCWVYTRGNAETECPIGSTSCGDTFGKMYAVGPTSDVQANVVVCLPGAPEPCLTTVEGVNLNLYERITDRMAALDTCGSDTGIGLLTPWGHYAGLIGSSLSALEDGVLRSRSGPSHPSSVSQPSPSFALLGQGLSQTKASFHGSDGRSRGSKSLMWSFATDNDLTDPSSGNTPSNATSLVFQIPFASEGGSLELCFRTGESDSDDLTRFTEPVGHVVYGWRLHGATLAVEATTNPNAVFYRVTVVSGIDAAGALSSTVVYLKPVKGYPEGTTVPCDYDLDTSGDVAHQVQGPVVSSDVDDVTWDDDLGGTSSRGSSASFKIPLLHYQGMAVCWSQLVEASPAQGSHSQSPFSVRSATLVGYFAGPSLPVLAENSDVAVACALAKTTCEIAVGPGRAAVDYTGGLAITPAFLDVRVTVVLDAELLAAPCPDPSDPGYENAIRATSQTRLVLPSDVLTPERQTFLVDSNARELLKTNGKAGICYRVDNCATESDAPTSDCTKFLGLALWVGPTAETPDKVTICKAQQRDCLLRIDGSNMDVVDYSAPRAAYAATCGEPGQYVTATLVQTSSTPSQETLDSDLVSNEHASWAAFAFAIQPASLWRLCWNPFDAATMQDEPAEDRFVVNRGFLVFPATPEVESERVELDSSSQTMLRLVISAMVTEAALEKVSRPDTPVTEHYVYVSPVLSHANGVAEDVVCADADEETKVQWTSVDAKTPTAFGNEDSNDAATASRIHYSITAISVEQQVCWRSVYRAEDGTVVHEERIYLSKVPAVLTPELDTSVANQVSPLLTFCSLGTEEMCLVTLKPRASSDSTPATFPPGGELYVVHEGDCPSERADPKLVNAAGDGVPTTDTTVVRLHVVTFDTTRVALGFPEDDRTWMSARKAAALCFVFGENQCPASGACVERIGMIYWRGPRVFEDTQLRVLCNDPQGCDISVTGLNLNTYDLSYSRVAALDSCGEPGGLGRLDIVRYPAGYTQDSPVEPLDDYFTSDDSFGQGSFAINNMGRGVLTCGASEAVSVTTASWGPADLQNSKVACDPVDVLEHVAAHCEGKAICVVYPHTPRDDETVRSYIGLKQEEFLRLSDPCPGTANEDLRLVGTHTCVAGTRSVTPEVAMVETTSRVAAGGANYSNPSTDAMDMVVKLPPDIAKVYELCWNPDPVITLQPARYNVKVGVAQIVPVAGLVDLISTVFERIDDANVEVVLRGILAEEVAVNTSIYLKQIPDEGAISCSNDDQENAIGKATFMSYESGDAGTTVIRYRIAAVDSEKAVCWRWTSQDFAAGGGGVQSILIGTLPGTVNPVSRAWGEMMCSLPGGTDCSIEFEPDSLLGTYPTEEEPGSGAVTGFTDYAQFANLHSHLRKGTKIGLIAGRESCPEDPQDLAYQRFTQTGIAEGDISDSEVQETTIGLPISGGKPSSLVSTMSVGLLHWLAVHKDAIVCWVNADECKTTKTPRFATCTATVGTLSWKGPIPTEWSVTAVDLVCRTGGRCRLKIPGRNMFKLDLSESPVAIVRTCGGDEGPGIAKLQQTPVLYPSQQADDGVQSGSLLQTTMSLSSNQRRAVRQLRRSCKMGSEDHADRCDTRLATGNTAMGFAAGSRRHPSFMEVLLGSRKAPSSSVDDSIEVVTTIKTGGEYAICWNPSALSTNLSDFTVNIGRVFSYGLEQIDALCYSGSYCELNFTYIGSSNPTLFVGVKAVDCSDPDLTTELGSGGVFKTTGRNTLSLSEPIPRRPQSSRVSYKLCWCDMNEVQECVGTSYSAPVGTLTVQFIEEKAVACQEAVGACSISFDASDFQGDSSGTIFLTQYSGTNADCMQPKKYVPHVSAIFGNIVVQVDQATLAATLGQHAAEQGSFAICRQMTAAIDEYTGSSNAVPEADENQVESAEPEQNAEGETPEQGAEEAGGNAAEPGAESGTQEGAVTPGVEPDGGEPVAPEVDSGGGESVAPGVDSGGGDSVAPGVDSGGGDSVAPGVDSGSGVAGTASEGVDEQSDLTTSQPEDLEAKSQTALGMVQLDDTGSDTSLQVTSSPALLGVLQFAGPASTEYQDETQVAVLGMATRIAVVTQGFDRFIDTDITADSSDIPTGVAHVRLVPAGGCGHDNGSNSVVLSLSQVIQKESDLPEKAIYSQEEILQINTGAIRKLDVCWCDLGTACKKDTDFTIPVLSVGLVAPEQDLVVKCPCGSKCPFEFQGVSEAPQHGVEPDYFVKNDGCSGAPAELPDQGHLVTVVSSVIAAEHSDDAVADVDRSPAGELETLNKQIQAFRAEVDRTSVFATGTTEGSREYAICYCAFRTGGCANDALIRIGTLTVYDVWRDKMSAVVADDVTIRPPSPPFSGIQGTLYAQAGAVTLPVSTLPDKAYQIDLSTLEGRRTPASVVDVRYCESEVTQSCDDEGAPRIDLTQIELKGPVSLSFEDECRLGFRCTIVTEVFNPTEEEKLAALASCGSSSEHDYGLSSGVRTAEDNPAKAVEVTFEWEKTLPDVGRSELDFCWCKKTNQVDCSAVDQYTLKVGTLYITGLAAGQEATCHVGSVCVAHLKGYRLVEEVVNVRVVAGECGTAGSEISGLPNGGIFVPEQVAESSAEVSLIEPFFGLAVETAAICQCPMPTQACESEADYAWEAGRYIFSGPSERVVINALSGQGVEVEIPWRGEQDTASDFFILTRDTMCSGTTSGLIDGVVDNGLGHLEDGEVAWEEFAYHGGIYSVCYCRRSTPLATGSANPFSGGSASASQHLCGTVAEYRVSVALVLLSGPVTSNAIFSCFGGLACHVDISVAGVDSLESQEFLDSAALQVSTESCGADVIMEAMLSDSEESSDTLDDSSSDAQMKTFNQRFGFPNVVTVSAGYYVACWKPATSSPALLLGDFVVKGPVADKTPLESSSGEDIDVAVTYVGLESSDEAKAMRIQIAPIPEGRENDAFDCASLNLSEAQPYLRYTNLNRAPDTVESVSVQFSRIVWKAVSILIDNQSPNVLPGSYFAICFCNGNRGDCSVSENYFFQTNKWAVGGLSQRTLDEPLPVGRTITLTLPGKRLPLHNHLMLLPSLDRSTFAERHCGDAGGAGDGRIISATRLAHVTDWVGFKEVTITSASRTILMCWCGGDNCQTGDKFRTFVGSLSVEFPKFEATSAVIGGTFTVTLRGSVLRAQDAITVVDQSKQCGEEGTDEMDASAVEVPVGLEVTDLIQLRQARVVHADSTADSTSLSVADTSTPLVWQSWPIKTKPSVSGRLRVCYCSSEGGVCTGASRFSVWVGNVQVKGPSTGEVEIVTVDGEAKVETSGVSLALTDKLRIFAKSLAASDTVRDRRELCESGITAESTTVVADYVSPDGRTETFPVDLEPGFRYVLCWSGGTGASTQSARANPAVTRAAPTVNLPSLYRANSGSNASTVQLAEEATAALNMLQQAASTGSATSALAPHAETETPTETWSYLDAITPTGFSTGLEFRLVQNFESEVLYIPGSPNVSHSYVAYVGQKDLQADCEEIKQNPLITMETMIHIQDDSVSFSVGRISEAGLYPVCVCDSTANECYDVGTAHVDKTYWKTVAELVYDNRFFMLPCVTRGIQASAADGQSWSEDRVWLPDGMGAWSFVLTTTDSDSKPAPVLKRTPATGSKAATWVNFYEKGLRSTVACATGSGQRIFFLGPGVVYMMDPVPGLTPDLSTATGQMFTHSVLKPVDFSVREPYIFFSDYETQVITSINIENPSLTHAFFPTDPVMLFSAGVNVMDTDENFMALCVADTFNHIVGRLNISFDTMNKPQSQVTGTPWTAYFGTPKTAQNGINGFSYPFALTSYSPQSTSEAELMSLLLVTELVSDRLVFLDLSNNGLTFYKQISLSERHLISGLQSVDKTVMLISRAWPPTSKSGGMDAYVSLLNLEDVGGDLYFTYPDFRSKLQSGLFYSFEPLITGSVIQSFKEVSGSDLAKMGLTLNSATGVISGTVSHTGPFTIAVAGGDLLETFTWTISGEAGCRSGEYFDSTNNACELCPVGTFRDQEANLQKCHDIKPYSTTLSPGSTHLAQCRCFPGFEIGNLGDCHPCGAGTYKSSISDTKCTGRCPGNMHSYIQGAENEEDLLCMCDAGYYEDGGGCTPCQQGYYCPGEHSPPEPCPENHTTKGGASKSISDCVCVAGYTKQGDACVECDRLSYKGTTGNDACTGCPQPAAKGDRDALIASTKLDEAQFTTKPGAKKVSDCMLCASGFFYDVSNGGCTPCRKNYYCPGTDQEPRACVENATTLRGGAESTFDCKCPKGYGGSVARNPLDKAIVCVACPKNTFQHLDGVMTDCLPCPPFTMTKSTKSASFSACVARPGFYLSSRLSDMSRSLAESRSDDGTVGDDVDLDDNALSGTTNSGWTTSSSNSERVRKAEVQYENMSDEELLDLPRLCQRGTGLIDILLPEVKMQKYTNSFEQCIIACARNVYCTSLTFTNEGNAVPAMTASVTNHTGTFIIGYWICELHMYGPPVDQETVASITDPITETVVPASWTVSCAMQRPESDTVWRSVTYEECPVNAYCPGDEEAQIYQCPASSVTLANRASAAEHCKCIPGYHLSGRQCEPCRVGTYKNTTDNTNCAECPTGFTTENLASISAYDCACIPGLYMIANADADAEGEADHTPADGSSNSSEDSIVTHPKPDADSSDSQAPAEQTEGHAGNTNQQVDAADGETPDTTHEEASEAESVSAVELRGGLLVRGDGGVLQRAFKASQNSASKRSSRALGDAIGEEQGLSFYQTTAAPWLQPDIRQELEKIVTLHPCVSCYKHMYCPGLWMDPPVNQIHMPPQHCPEGSTVPLSTALSDSVEKCLCMAGYAVVEGSTGGTHEDNAYFGCEKCAAGTYKELQENAPCAGRCMRDAETIEGAVAKIQCFCKIGKYAVVAEDAEGIITCQDCIAGGVCPGGLKTRARQAVEQDHSFVKITIDDHQVPFPSSGFYAVYKPLNETVWSPAMVPMVASFTGDTFKEFTDTGPAPDDHTDEGGANLDSTGGSGEPSSSAPVDPSGENEGQLLTGTTGAVSALQMRSRANDTSVHQYDRIPDIHPCVDDVRCRGGSHNSCVHGSAGYLCSACEEDYSEIRYKSGCQACLPLWLDSFIFILMRLVVCGIIWIITALTIIAVQQQACIHPVLIRIVMSHMFFLSVYGLMPATSQSQLAGWASIYRLFFFEFYFALHPYFKMPCFFRSLGIVMPEAHVWYWQHFFQIFVPFIDAVLLTIIGAICVATYKVMYSAYISRVLVVLEEARQAHGDDMWTEKTIRKIESERCLGMFRYIYGTSTPWENFVRLCTDLIPAYTAIWFWHFPTFVIECTMLMGCIETRYKSEDPISVLAAFPVQICSFENPYFLSGLILGGVGLLVWGVGSIAGFVAYMSGDHSSDTIEQRFKHGFLVNGYQYAYRWWEGVIGLRKTCVALIITMYVHANASGAQEIFRNSANLALTVLSTALQLQLEPFDKRSHDMANRMEFYGLMVNIIIGVIFQGSYYFEVFKYMGAIPLAVAIFYYLYVLWSLFVEWGRMVMMRPHLVSIPSLWRYYNRVTRSLARLYTSRNAKIYYNYITKDMVLEAATKSRVFHLRRLLLRRKKTSYRKINYENRTYFVAALSDSLSQLVIAWCQFTIPGDWLDFTIRYAFCYCFWQRYQDNRSLRVPLDLEEFEAVKPTLFSDWYYDSEKNDPQGEGDIDFGTEILEGGEITFNTAEQDFLDLMLDDDVYDDSPITLMELYVAVQSMQHVPQRQLRRLHLAYRERMTQAGDSTAPQLRKENHALEGELEELNRALLEMAGADENMPDLTFSPLDFFFTVEMVNQAQLEVERLRGLIESEIDDIARARAAQAVAVHLELSMNEAADVDKLLEAMETDERTTKEEEMTRIGYVEESTSRMEKKAGLAGRRARLAFADKRPPVNLDDKRRIKLGLAAGVGGAQRRRIGLVTRGAEGPPGAKRRIGRHEVEFHRTVQGLAAGAAPAAGLRSHMGTSSSLGDQLGDDRRTVRLGTNLSTPSAVGNKRTLRRDTSGASAELIVDTAPKAPAATRTLSPLLDREPPVVESEGSVGERRESPTPSRSPSGTTRTVGSVVRSVTPEPSDSVGREESGSEAPLISPSASSLASPRSLSPLTERRGSQSSDLGGRRRLGPLTGPRPPPPVGEAAPAEAPSPSPRSSSPLAAQPKGQGLPLGKRQLKKPGSPKQE</sequence>
<reference evidence="10" key="1">
    <citation type="submission" date="2020-03" db="EMBL/GenBank/DDBJ databases">
        <title>Genome sequence of Toxoplasma gondii RH-88 strain.</title>
        <authorList>
            <person name="Lorenzi H.A."/>
            <person name="Venepally P."/>
            <person name="Rozenberg A."/>
            <person name="Sibley D."/>
        </authorList>
    </citation>
    <scope>NUCLEOTIDE SEQUENCE [LARGE SCALE GENOMIC DNA]</scope>
    <source>
        <strain evidence="10">RH-88</strain>
    </source>
</reference>
<reference evidence="8" key="2">
    <citation type="journal article" date="2022" name="EMBO J.">
        <title>An apical membrane complex for triggering rhoptry exocytosis and invasion in Toxoplasma.</title>
        <authorList>
            <person name="Sparvoli D."/>
            <person name="Delabre J."/>
            <person name="Penarete-Vargas D.M."/>
            <person name="Kumar Mageswaran S."/>
            <person name="Tsypin L.M."/>
            <person name="Heckendorn J."/>
            <person name="Theveny L."/>
            <person name="Maynadier M."/>
            <person name="Mendonca Cova M."/>
            <person name="Berry-Sterkers L."/>
            <person name="Guerin A."/>
            <person name="Dubremetz J.F."/>
            <person name="Urbach S."/>
            <person name="Striepen B."/>
            <person name="Turkewitz A.P."/>
            <person name="Chang Y.W."/>
            <person name="Lebrun M."/>
        </authorList>
    </citation>
    <scope>FUNCTION</scope>
    <scope>INTERACTION WITH CYSTEINE REPEAT MODULAR PROTEIN A; MICRONEMAL PROTEIN 15 AND THROMBOSPONDIN TYPE 1 DOMAIN-CONTAINING PROTEIN</scope>
    <scope>DISRUPTION PHENOTYPE</scope>
</reference>
<reference evidence="8" key="3">
    <citation type="journal article" date="2023" name="PLoS Biol.">
        <title>A central CRMP complex essential for invasion in Toxoplasma gondii.</title>
        <authorList>
            <person name="Singer M."/>
            <person name="Simon K."/>
            <person name="Forne I."/>
            <person name="Meissner M."/>
        </authorList>
    </citation>
    <scope>FUNCTION</scope>
    <scope>SUBCELLULAR LOCATION</scope>
    <scope>INTERACTION WITH CYSTEINE REPEAT MODULAR PROTEIN A; MICRONEMAL PROTEIN 15 AND THROMBOSPONDIN TYPE 1 DOMAIN-CONTAINING PROTEIN</scope>
</reference>
<protein>
    <recommendedName>
        <fullName evidence="6 7">Cysteine repeat modular protein B</fullName>
        <shortName evidence="7">CRMPB</shortName>
        <shortName evidence="6">TgCRMPb</shortName>
    </recommendedName>
    <alternativeName>
        <fullName evidence="9">GCC2 and GCC3 domain-containing protein</fullName>
    </alternativeName>
</protein>
<accession>A0A7J6KC99</accession>
<dbReference type="EMBL" id="JAAUHK010000190">
    <property type="protein sequence ID" value="KAF4644594.1"/>
    <property type="molecule type" value="Genomic_DNA"/>
</dbReference>
<dbReference type="VEuPathDB" id="ToxoDB:TGME49_292020"/>
<dbReference type="Proteomes" id="UP000557509">
    <property type="component" value="Unassembled WGS sequence"/>
</dbReference>
<dbReference type="GO" id="GO:0005783">
    <property type="term" value="C:endoplasmic reticulum"/>
    <property type="evidence" value="ECO:0007669"/>
    <property type="project" value="UniProtKB-SubCell"/>
</dbReference>
<dbReference type="GO" id="GO:0005794">
    <property type="term" value="C:Golgi apparatus"/>
    <property type="evidence" value="ECO:0007669"/>
    <property type="project" value="UniProtKB-SubCell"/>
</dbReference>
<dbReference type="GO" id="GO:0005886">
    <property type="term" value="C:plasma membrane"/>
    <property type="evidence" value="ECO:0007669"/>
    <property type="project" value="UniProtKB-SubCell"/>
</dbReference>
<dbReference type="GO" id="GO:0006887">
    <property type="term" value="P:exocytosis"/>
    <property type="evidence" value="ECO:0007669"/>
    <property type="project" value="UniProtKB-KW"/>
</dbReference>
<dbReference type="CDD" id="cd22823">
    <property type="entry name" value="Gal_Rha_Lectin"/>
    <property type="match status" value="1"/>
</dbReference>
<dbReference type="Gene3D" id="2.10.50.10">
    <property type="entry name" value="Tumor Necrosis Factor Receptor, subunit A, domain 2"/>
    <property type="match status" value="5"/>
</dbReference>
<dbReference type="InterPro" id="IPR056048">
    <property type="entry name" value="CRMPA/B-like_DUF7631"/>
</dbReference>
<dbReference type="InterPro" id="IPR009030">
    <property type="entry name" value="Growth_fac_rcpt_cys_sf"/>
</dbReference>
<dbReference type="InterPro" id="IPR011641">
    <property type="entry name" value="Tyr-kin_ephrin_A/B_rcpt-like"/>
</dbReference>
<dbReference type="PANTHER" id="PTHR46967">
    <property type="entry name" value="INSULIN-LIKE GROWTH FACTOR BINDING PROTEIN,N-TERMINAL"/>
    <property type="match status" value="1"/>
</dbReference>
<dbReference type="PANTHER" id="PTHR46967:SF2">
    <property type="entry name" value="SUSHI, VON WILLEBRAND FACTOR TYPE A, EGF AND PENTRAXIN DOMAIN-CONTAINING PROTEIN 1-LIKE"/>
    <property type="match status" value="1"/>
</dbReference>
<dbReference type="Pfam" id="PF24634">
    <property type="entry name" value="DUF7631"/>
    <property type="match status" value="1"/>
</dbReference>
<dbReference type="Pfam" id="PF07699">
    <property type="entry name" value="Ephrin_rec_like"/>
    <property type="match status" value="3"/>
</dbReference>
<dbReference type="SMART" id="SM01411">
    <property type="entry name" value="Ephrin_rec_like"/>
    <property type="match status" value="8"/>
</dbReference>
<dbReference type="SUPFAM" id="SSF57184">
    <property type="entry name" value="Growth factor receptor domain"/>
    <property type="match status" value="2"/>
</dbReference>
<organism evidence="10">
    <name type="scientific">Toxoplasma gondii</name>
    <dbReference type="NCBI Taxonomy" id="5811"/>
    <lineage>
        <taxon>Eukaryota</taxon>
        <taxon>Sar</taxon>
        <taxon>Alveolata</taxon>
        <taxon>Apicomplexa</taxon>
        <taxon>Conoidasida</taxon>
        <taxon>Coccidia</taxon>
        <taxon>Eucoccidiorida</taxon>
        <taxon>Eimeriorina</taxon>
        <taxon>Sarcocystidae</taxon>
        <taxon>Toxoplasma</taxon>
    </lineage>
</organism>
<evidence type="ECO:0000255" key="1"/>
<evidence type="ECO:0000255" key="2">
    <source>
        <dbReference type="PROSITE-ProRule" id="PRU00498"/>
    </source>
</evidence>
<evidence type="ECO:0000256" key="3">
    <source>
        <dbReference type="SAM" id="MobiDB-lite"/>
    </source>
</evidence>
<evidence type="ECO:0000269" key="4">
    <source>
    </source>
</evidence>
<evidence type="ECO:0000269" key="5">
    <source>
    </source>
</evidence>
<evidence type="ECO:0000303" key="6">
    <source>
    </source>
</evidence>
<evidence type="ECO:0000303" key="7">
    <source>
    </source>
</evidence>
<evidence type="ECO:0000305" key="8"/>
<evidence type="ECO:0000312" key="9">
    <source>
        <dbReference type="EMBL" id="KAF4644594.1"/>
    </source>
</evidence>
<evidence type="ECO:0000312" key="10">
    <source>
        <dbReference type="Proteomes" id="UP000557509"/>
    </source>
</evidence>
<feature type="chain" id="PRO_0000461860" description="Cysteine repeat modular protein B">
    <location>
        <begin position="1"/>
        <end position="7603"/>
    </location>
</feature>
<feature type="transmembrane region" description="Helical" evidence="1">
    <location>
        <begin position="223"/>
        <end position="243"/>
    </location>
</feature>
<feature type="transmembrane region" description="Helical" evidence="1">
    <location>
        <begin position="6520"/>
        <end position="6540"/>
    </location>
</feature>
<feature type="transmembrane region" description="Helical" evidence="1">
    <location>
        <begin position="6552"/>
        <end position="6572"/>
    </location>
</feature>
<feature type="transmembrane region" description="Helical" evidence="1">
    <location>
        <begin position="6578"/>
        <end position="6598"/>
    </location>
</feature>
<feature type="transmembrane region" description="Helical" evidence="1">
    <location>
        <begin position="6627"/>
        <end position="6647"/>
    </location>
</feature>
<feature type="transmembrane region" description="Helical" evidence="1">
    <location>
        <begin position="6770"/>
        <end position="6790"/>
    </location>
</feature>
<feature type="transmembrane region" description="Helical" evidence="1">
    <location>
        <begin position="6831"/>
        <end position="6851"/>
    </location>
</feature>
<feature type="transmembrane region" description="Helical" evidence="1">
    <location>
        <begin position="6888"/>
        <end position="6908"/>
    </location>
</feature>
<feature type="transmembrane region" description="Helical" evidence="1">
    <location>
        <begin position="6912"/>
        <end position="6932"/>
    </location>
</feature>
<feature type="transmembrane region" description="Helical" evidence="1">
    <location>
        <begin position="7017"/>
        <end position="7037"/>
    </location>
</feature>
<feature type="region of interest" description="Disordered" evidence="3">
    <location>
        <begin position="248"/>
        <end position="275"/>
    </location>
</feature>
<feature type="region of interest" description="Disordered" evidence="3">
    <location>
        <begin position="291"/>
        <end position="323"/>
    </location>
</feature>
<feature type="region of interest" description="Disordered" evidence="3">
    <location>
        <begin position="1554"/>
        <end position="1574"/>
    </location>
</feature>
<feature type="region of interest" description="Disordered" evidence="3">
    <location>
        <begin position="3316"/>
        <end position="3445"/>
    </location>
</feature>
<feature type="region of interest" description="Disordered" evidence="3">
    <location>
        <begin position="5758"/>
        <end position="5799"/>
    </location>
</feature>
<feature type="region of interest" description="Disordered" evidence="3">
    <location>
        <begin position="6043"/>
        <end position="6115"/>
    </location>
</feature>
<feature type="region of interest" description="Disordered" evidence="3">
    <location>
        <begin position="6391"/>
        <end position="6436"/>
    </location>
</feature>
<feature type="region of interest" description="Disordered" evidence="3">
    <location>
        <begin position="7379"/>
        <end position="7603"/>
    </location>
</feature>
<feature type="coiled-coil region" evidence="1">
    <location>
        <begin position="7174"/>
        <end position="7242"/>
    </location>
</feature>
<feature type="compositionally biased region" description="Low complexity" evidence="3">
    <location>
        <begin position="263"/>
        <end position="275"/>
    </location>
</feature>
<feature type="compositionally biased region" description="Basic residues" evidence="3">
    <location>
        <begin position="302"/>
        <end position="313"/>
    </location>
</feature>
<feature type="compositionally biased region" description="Low complexity" evidence="3">
    <location>
        <begin position="1557"/>
        <end position="1573"/>
    </location>
</feature>
<feature type="compositionally biased region" description="Acidic residues" evidence="3">
    <location>
        <begin position="3321"/>
        <end position="3340"/>
    </location>
</feature>
<feature type="compositionally biased region" description="Low complexity" evidence="3">
    <location>
        <begin position="3342"/>
        <end position="3360"/>
    </location>
</feature>
<feature type="compositionally biased region" description="Acidic residues" evidence="3">
    <location>
        <begin position="5767"/>
        <end position="5776"/>
    </location>
</feature>
<feature type="compositionally biased region" description="Low complexity" evidence="3">
    <location>
        <begin position="5780"/>
        <end position="5794"/>
    </location>
</feature>
<feature type="compositionally biased region" description="Polar residues" evidence="3">
    <location>
        <begin position="6051"/>
        <end position="6060"/>
    </location>
</feature>
<feature type="compositionally biased region" description="Basic and acidic residues" evidence="3">
    <location>
        <begin position="6391"/>
        <end position="6405"/>
    </location>
</feature>
<feature type="compositionally biased region" description="Polar residues" evidence="3">
    <location>
        <begin position="6410"/>
        <end position="6423"/>
    </location>
</feature>
<feature type="compositionally biased region" description="Polar residues" evidence="3">
    <location>
        <begin position="7408"/>
        <end position="7417"/>
    </location>
</feature>
<feature type="compositionally biased region" description="Low complexity" evidence="3">
    <location>
        <begin position="7474"/>
        <end position="7496"/>
    </location>
</feature>
<feature type="compositionally biased region" description="Low complexity" evidence="3">
    <location>
        <begin position="7509"/>
        <end position="7541"/>
    </location>
</feature>
<feature type="compositionally biased region" description="Low complexity" evidence="3">
    <location>
        <begin position="7560"/>
        <end position="7582"/>
    </location>
</feature>
<feature type="glycosylation site" description="N-linked (GlcNAc...) asparagine" evidence="2">
    <location>
        <position position="172"/>
    </location>
</feature>
<feature type="glycosylation site" description="N-linked (GlcNAc...) asparagine" evidence="2">
    <location>
        <position position="329"/>
    </location>
</feature>
<feature type="glycosylation site" description="N-linked (GlcNAc...) asparagine" evidence="2">
    <location>
        <position position="589"/>
    </location>
</feature>
<feature type="glycosylation site" description="N-linked (GlcNAc...) asparagine" evidence="2">
    <location>
        <position position="848"/>
    </location>
</feature>
<feature type="glycosylation site" description="N-linked (GlcNAc...) asparagine" evidence="2">
    <location>
        <position position="1128"/>
    </location>
</feature>
<feature type="glycosylation site" description="N-linked (GlcNAc...) asparagine" evidence="2">
    <location>
        <position position="1183"/>
    </location>
</feature>
<feature type="glycosylation site" description="N-linked (GlcNAc...) asparagine" evidence="2">
    <location>
        <position position="1402"/>
    </location>
</feature>
<feature type="glycosylation site" description="N-linked (GlcNAc...) asparagine" evidence="2">
    <location>
        <position position="1622"/>
    </location>
</feature>
<feature type="glycosylation site" description="N-linked (GlcNAc...) asparagine" evidence="2">
    <location>
        <position position="2578"/>
    </location>
</feature>
<feature type="glycosylation site" description="N-linked (GlcNAc...) asparagine" evidence="2">
    <location>
        <position position="2664"/>
    </location>
</feature>
<feature type="glycosylation site" description="N-linked (GlcNAc...) asparagine" evidence="2">
    <location>
        <position position="3094"/>
    </location>
</feature>
<feature type="glycosylation site" description="N-linked (GlcNAc...) asparagine" evidence="2">
    <location>
        <position position="3126"/>
    </location>
</feature>
<feature type="glycosylation site" description="N-linked (GlcNAc...) asparagine" evidence="2">
    <location>
        <position position="3546"/>
    </location>
</feature>
<feature type="glycosylation site" description="N-linked (GlcNAc...) asparagine" evidence="2">
    <location>
        <position position="4367"/>
    </location>
</feature>
<feature type="glycosylation site" description="N-linked (GlcNAc...) asparagine" evidence="2">
    <location>
        <position position="4823"/>
    </location>
</feature>
<feature type="glycosylation site" description="N-linked (GlcNAc...) asparagine" evidence="2">
    <location>
        <position position="4901"/>
    </location>
</feature>
<feature type="glycosylation site" description="N-linked (GlcNAc...) asparagine" evidence="2">
    <location>
        <position position="5186"/>
    </location>
</feature>
<feature type="glycosylation site" description="N-linked (GlcNAc...) asparagine" evidence="2">
    <location>
        <position position="5546"/>
    </location>
</feature>
<feature type="glycosylation site" description="N-linked (GlcNAc...) asparagine" evidence="2">
    <location>
        <position position="5666"/>
    </location>
</feature>
<feature type="glycosylation site" description="N-linked (GlcNAc...) asparagine" evidence="2">
    <location>
        <position position="5806"/>
    </location>
</feature>
<feature type="glycosylation site" description="N-linked (GlcNAc...) asparagine" evidence="2">
    <location>
        <position position="5876"/>
    </location>
</feature>
<feature type="glycosylation site" description="N-linked (GlcNAc...) asparagine" evidence="2">
    <location>
        <position position="5998"/>
    </location>
</feature>
<feature type="glycosylation site" description="N-linked (GlcNAc...) asparagine" evidence="2">
    <location>
        <position position="6055"/>
    </location>
</feature>
<feature type="glycosylation site" description="N-linked (GlcNAc...) asparagine" evidence="2">
    <location>
        <position position="6369"/>
    </location>
</feature>
<feature type="glycosylation site" description="N-linked (GlcNAc...) asparagine" evidence="2">
    <location>
        <position position="6453"/>
    </location>
</feature>
<feature type="glycosylation site" description="N-linked (GlcNAc...) asparagine" evidence="2">
    <location>
        <position position="7013"/>
    </location>
</feature>
<feature type="glycosylation site" description="N-linked (GlcNAc...) asparagine" evidence="2">
    <location>
        <position position="7061"/>
    </location>
</feature>
<feature type="glycosylation site" description="N-linked (GlcNAc...) asparagine" evidence="2">
    <location>
        <position position="7411"/>
    </location>
</feature>
<gene>
    <name evidence="9" type="ORF">TGRH88_015880</name>
</gene>
<comment type="function">
    <text evidence="4 5">Required for triggering rhoptry secretion (PubMed:36245278, PubMed:36602948). Plays a role in host cell invasion (PubMed:36245278, PubMed:36602948).</text>
</comment>
<comment type="subunit">
    <text evidence="4 5">Component of a complex, at least composed of cysteine repeat modular protein A (CRMPa), cysteine repeat modular protein B (CRMPb), micronemal protein 15 (MIC15) and thrombospondin type 1 domain-containing protein (TSP1).</text>
</comment>
<comment type="subcellular location">
    <subcellularLocation>
        <location evidence="5">Cell membrane</location>
        <topology evidence="1">Multi-pass membrane protein</topology>
    </subcellularLocation>
    <subcellularLocation>
        <location evidence="5">Endoplasmic reticulum</location>
    </subcellularLocation>
    <subcellularLocation>
        <location evidence="5">Golgi apparatus</location>
    </subcellularLocation>
    <text evidence="4 5">Dynamically localizes throughout the secretory pathway of the parasite with considerable retention time in the endoplasmic reticulum; gets delivered to the plasma membrane (PubMed:36602948). In freshly egressed parasites kept in contact with host cells, accumulates at the tip of the extruded conoid (PubMed:36245278). During invasion process, the apical signal from the protein disappears as soon as the moving junction is formed (PubMed:36245278). In freshly invaded parasites accumulates near the basal end (PubMed:36602948).</text>
</comment>
<comment type="disruption phenotype">
    <text evidence="4">Conditional knockout results in defects in plaque formation due to impaired host cell invasion (PubMed:36245278). Defects in rhoptry contents discharge (PubMed:36245278). No significant effect on rhoptry secretory apparatus formation (PubMed:36245278). No significant effects on morphology and positioning of microneme and rhoptry structures (PubMed:36245278). No significant effects on parasite replication, egress and attachment to host cells (PubMed:36245278). No significant effect on microneme secretion (PubMed:36245278).</text>
</comment>
<proteinExistence type="evidence at protein level"/>
<keyword id="KW-0106">Calcium</keyword>
<keyword id="KW-1003">Cell membrane</keyword>
<keyword id="KW-0175">Coiled coil</keyword>
<keyword id="KW-0256">Endoplasmic reticulum</keyword>
<keyword id="KW-0268">Exocytosis</keyword>
<keyword id="KW-0325">Glycoprotein</keyword>
<keyword id="KW-0333">Golgi apparatus</keyword>
<keyword id="KW-0472">Membrane</keyword>
<keyword id="KW-1185">Reference proteome</keyword>
<keyword id="KW-0812">Transmembrane</keyword>
<keyword id="KW-1133">Transmembrane helix</keyword>